<keyword id="KW-0963">Cytoplasm</keyword>
<keyword id="KW-0369">Histidine metabolism</keyword>
<keyword id="KW-0456">Lyase</keyword>
<keyword id="KW-0520">NAD</keyword>
<keyword id="KW-1185">Reference proteome</keyword>
<dbReference type="EC" id="4.2.1.49" evidence="1"/>
<dbReference type="EMBL" id="AP006840">
    <property type="protein sequence ID" value="BAD42175.1"/>
    <property type="molecule type" value="Genomic_DNA"/>
</dbReference>
<dbReference type="RefSeq" id="WP_011197306.1">
    <property type="nucleotide sequence ID" value="NC_006177.1"/>
</dbReference>
<dbReference type="SMR" id="Q67JH5"/>
<dbReference type="STRING" id="292459.STH3193"/>
<dbReference type="KEGG" id="sth:STH3193"/>
<dbReference type="eggNOG" id="COG2987">
    <property type="taxonomic scope" value="Bacteria"/>
</dbReference>
<dbReference type="HOGENOM" id="CLU_018868_0_1_9"/>
<dbReference type="OrthoDB" id="9764874at2"/>
<dbReference type="UniPathway" id="UPA00379">
    <property type="reaction ID" value="UER00550"/>
</dbReference>
<dbReference type="Proteomes" id="UP000000417">
    <property type="component" value="Chromosome"/>
</dbReference>
<dbReference type="GO" id="GO:0005737">
    <property type="term" value="C:cytoplasm"/>
    <property type="evidence" value="ECO:0007669"/>
    <property type="project" value="UniProtKB-SubCell"/>
</dbReference>
<dbReference type="GO" id="GO:0016153">
    <property type="term" value="F:urocanate hydratase activity"/>
    <property type="evidence" value="ECO:0007669"/>
    <property type="project" value="UniProtKB-UniRule"/>
</dbReference>
<dbReference type="GO" id="GO:0019556">
    <property type="term" value="P:L-histidine catabolic process to glutamate and formamide"/>
    <property type="evidence" value="ECO:0007669"/>
    <property type="project" value="UniProtKB-UniPathway"/>
</dbReference>
<dbReference type="GO" id="GO:0019557">
    <property type="term" value="P:L-histidine catabolic process to glutamate and formate"/>
    <property type="evidence" value="ECO:0007669"/>
    <property type="project" value="UniProtKB-UniPathway"/>
</dbReference>
<dbReference type="FunFam" id="3.40.50.10730:FF:000001">
    <property type="entry name" value="Urocanate hydratase"/>
    <property type="match status" value="1"/>
</dbReference>
<dbReference type="Gene3D" id="3.40.50.10730">
    <property type="entry name" value="Urocanase like domains"/>
    <property type="match status" value="1"/>
</dbReference>
<dbReference type="Gene3D" id="3.40.1770.10">
    <property type="entry name" value="Urocanase superfamily"/>
    <property type="match status" value="1"/>
</dbReference>
<dbReference type="HAMAP" id="MF_00577">
    <property type="entry name" value="HutU"/>
    <property type="match status" value="1"/>
</dbReference>
<dbReference type="InterPro" id="IPR055351">
    <property type="entry name" value="Urocanase"/>
</dbReference>
<dbReference type="InterPro" id="IPR023637">
    <property type="entry name" value="Urocanase-like"/>
</dbReference>
<dbReference type="InterPro" id="IPR035401">
    <property type="entry name" value="Urocanase_C"/>
</dbReference>
<dbReference type="InterPro" id="IPR038364">
    <property type="entry name" value="Urocanase_central_sf"/>
</dbReference>
<dbReference type="InterPro" id="IPR023636">
    <property type="entry name" value="Urocanase_CS"/>
</dbReference>
<dbReference type="InterPro" id="IPR035400">
    <property type="entry name" value="Urocanase_N"/>
</dbReference>
<dbReference type="InterPro" id="IPR035085">
    <property type="entry name" value="Urocanase_Rossmann-like"/>
</dbReference>
<dbReference type="InterPro" id="IPR036190">
    <property type="entry name" value="Urocanase_sf"/>
</dbReference>
<dbReference type="NCBIfam" id="TIGR01228">
    <property type="entry name" value="hutU"/>
    <property type="match status" value="1"/>
</dbReference>
<dbReference type="NCBIfam" id="NF003820">
    <property type="entry name" value="PRK05414.1"/>
    <property type="match status" value="1"/>
</dbReference>
<dbReference type="PANTHER" id="PTHR12216">
    <property type="entry name" value="UROCANATE HYDRATASE"/>
    <property type="match status" value="1"/>
</dbReference>
<dbReference type="PANTHER" id="PTHR12216:SF4">
    <property type="entry name" value="UROCANATE HYDRATASE"/>
    <property type="match status" value="1"/>
</dbReference>
<dbReference type="Pfam" id="PF01175">
    <property type="entry name" value="Urocanase"/>
    <property type="match status" value="1"/>
</dbReference>
<dbReference type="Pfam" id="PF17392">
    <property type="entry name" value="Urocanase_C"/>
    <property type="match status" value="1"/>
</dbReference>
<dbReference type="Pfam" id="PF17391">
    <property type="entry name" value="Urocanase_N"/>
    <property type="match status" value="1"/>
</dbReference>
<dbReference type="PIRSF" id="PIRSF001423">
    <property type="entry name" value="Urocanate_hydrat"/>
    <property type="match status" value="1"/>
</dbReference>
<dbReference type="SUPFAM" id="SSF111326">
    <property type="entry name" value="Urocanase"/>
    <property type="match status" value="1"/>
</dbReference>
<dbReference type="PROSITE" id="PS01233">
    <property type="entry name" value="UROCANASE"/>
    <property type="match status" value="1"/>
</dbReference>
<protein>
    <recommendedName>
        <fullName evidence="1">Urocanate hydratase</fullName>
        <shortName evidence="1">Urocanase</shortName>
        <ecNumber evidence="1">4.2.1.49</ecNumber>
    </recommendedName>
    <alternativeName>
        <fullName evidence="1">Imidazolonepropionate hydrolase</fullName>
    </alternativeName>
</protein>
<gene>
    <name evidence="1" type="primary">hutU</name>
    <name type="ordered locus">STH3193</name>
</gene>
<organism>
    <name type="scientific">Symbiobacterium thermophilum (strain DSM 24528 / JCM 14929 / IAM 14863 / T)</name>
    <dbReference type="NCBI Taxonomy" id="292459"/>
    <lineage>
        <taxon>Bacteria</taxon>
        <taxon>Bacillati</taxon>
        <taxon>Bacillota</taxon>
        <taxon>Clostridia</taxon>
        <taxon>Eubacteriales</taxon>
        <taxon>Symbiobacteriaceae</taxon>
        <taxon>Symbiobacterium</taxon>
    </lineage>
</organism>
<comment type="function">
    <text evidence="1">Catalyzes the conversion of urocanate to 4-imidazolone-5-propionate.</text>
</comment>
<comment type="catalytic activity">
    <reaction evidence="1">
        <text>4-imidazolone-5-propanoate = trans-urocanate + H2O</text>
        <dbReference type="Rhea" id="RHEA:13101"/>
        <dbReference type="ChEBI" id="CHEBI:15377"/>
        <dbReference type="ChEBI" id="CHEBI:17771"/>
        <dbReference type="ChEBI" id="CHEBI:77893"/>
        <dbReference type="EC" id="4.2.1.49"/>
    </reaction>
</comment>
<comment type="cofactor">
    <cofactor evidence="1">
        <name>NAD(+)</name>
        <dbReference type="ChEBI" id="CHEBI:57540"/>
    </cofactor>
    <text evidence="1">Binds 1 NAD(+) per subunit.</text>
</comment>
<comment type="pathway">
    <text evidence="1">Amino-acid degradation; L-histidine degradation into L-glutamate; N-formimidoyl-L-glutamate from L-histidine: step 2/3.</text>
</comment>
<comment type="subcellular location">
    <subcellularLocation>
        <location evidence="1">Cytoplasm</location>
    </subcellularLocation>
</comment>
<comment type="similarity">
    <text evidence="1">Belongs to the urocanase family.</text>
</comment>
<name>HUTU_SYMTH</name>
<proteinExistence type="inferred from homology"/>
<feature type="chain" id="PRO_1000025158" description="Urocanate hydratase">
    <location>
        <begin position="1"/>
        <end position="551"/>
    </location>
</feature>
<feature type="active site" evidence="1">
    <location>
        <position position="406"/>
    </location>
</feature>
<feature type="binding site" evidence="1">
    <location>
        <begin position="48"/>
        <end position="49"/>
    </location>
    <ligand>
        <name>NAD(+)</name>
        <dbReference type="ChEBI" id="CHEBI:57540"/>
    </ligand>
</feature>
<feature type="binding site" evidence="1">
    <location>
        <position position="126"/>
    </location>
    <ligand>
        <name>NAD(+)</name>
        <dbReference type="ChEBI" id="CHEBI:57540"/>
    </ligand>
</feature>
<feature type="binding site" evidence="1">
    <location>
        <begin position="172"/>
        <end position="174"/>
    </location>
    <ligand>
        <name>NAD(+)</name>
        <dbReference type="ChEBI" id="CHEBI:57540"/>
    </ligand>
</feature>
<feature type="binding site" evidence="1">
    <location>
        <position position="192"/>
    </location>
    <ligand>
        <name>NAD(+)</name>
        <dbReference type="ChEBI" id="CHEBI:57540"/>
    </ligand>
</feature>
<feature type="binding site" evidence="1">
    <location>
        <position position="197"/>
    </location>
    <ligand>
        <name>NAD(+)</name>
        <dbReference type="ChEBI" id="CHEBI:57540"/>
    </ligand>
</feature>
<feature type="binding site" evidence="1">
    <location>
        <begin position="238"/>
        <end position="239"/>
    </location>
    <ligand>
        <name>NAD(+)</name>
        <dbReference type="ChEBI" id="CHEBI:57540"/>
    </ligand>
</feature>
<feature type="binding site" evidence="1">
    <location>
        <begin position="259"/>
        <end position="263"/>
    </location>
    <ligand>
        <name>NAD(+)</name>
        <dbReference type="ChEBI" id="CHEBI:57540"/>
    </ligand>
</feature>
<feature type="binding site" evidence="1">
    <location>
        <begin position="269"/>
        <end position="270"/>
    </location>
    <ligand>
        <name>NAD(+)</name>
        <dbReference type="ChEBI" id="CHEBI:57540"/>
    </ligand>
</feature>
<feature type="binding site" evidence="1">
    <location>
        <position position="318"/>
    </location>
    <ligand>
        <name>NAD(+)</name>
        <dbReference type="ChEBI" id="CHEBI:57540"/>
    </ligand>
</feature>
<feature type="binding site" evidence="1">
    <location>
        <position position="488"/>
    </location>
    <ligand>
        <name>NAD(+)</name>
        <dbReference type="ChEBI" id="CHEBI:57540"/>
    </ligand>
</feature>
<evidence type="ECO:0000255" key="1">
    <source>
        <dbReference type="HAMAP-Rule" id="MF_00577"/>
    </source>
</evidence>
<reference key="1">
    <citation type="journal article" date="2004" name="Nucleic Acids Res.">
        <title>Genome sequence of Symbiobacterium thermophilum, an uncultivable bacterium that depends on microbial commensalism.</title>
        <authorList>
            <person name="Ueda K."/>
            <person name="Yamashita A."/>
            <person name="Ishikawa J."/>
            <person name="Shimada M."/>
            <person name="Watsuji T."/>
            <person name="Morimura K."/>
            <person name="Ikeda H."/>
            <person name="Hattori M."/>
            <person name="Beppu T."/>
        </authorList>
    </citation>
    <scope>NUCLEOTIDE SEQUENCE [LARGE SCALE GENOMIC DNA]</scope>
    <source>
        <strain>DSM 24528 / JCM 14929 / IAM 14863 / T</strain>
    </source>
</reference>
<accession>Q67JH5</accession>
<sequence length="551" mass="60753">MEMTRTVRAPRGTQLSCKGWQQEAALRMLMNNLDPEVAERPEELVVYGGSGKAARSWEAFDAIVKALRSLEDDETLLVQSGKPVAIFRTHRMAPRVLIANSNLVARWATWEHFWELERKGLMMFGQMTAGSWIYIGTQGILQGTYETFAEAARQHFGGSLKGRLALTAGLGGMGGAQPLAVTMNEGVAIVVEVDEARIQRRLDHRYLDRMTRSLDEALAWARESMAKGEPLSIGLLGNAATIYPEIVRRGVIPDVVTDQTSAHDPLNGYIPEGLSVQEAAKLRKADPDEYIRRAKASIVKHVQAMLDMQKAGAVVFDYGNNIRQQAYEEGLKDAFAFPGFVPAFIRPLFCEGKGPFRWVALSGDPEDIYKTDRAIMELFPENQSLRRWLEMAQKKVHFQGLPARICWLGYGERVKAGLKFNEMVASGELKAPIVIGRDHLDAGSVASPNRETEAMKDGSDAVADWPLLNALVNTAAGATWVSIHHGGGVGIGYSQHAGMVVVADGTEEARVRLERVLTTDPGMGVVRHVDAGYEKALQVARERGIRLPMYE</sequence>